<organism>
    <name type="scientific">Geobacillus thermodenitrificans (strain NG80-2)</name>
    <dbReference type="NCBI Taxonomy" id="420246"/>
    <lineage>
        <taxon>Bacteria</taxon>
        <taxon>Bacillati</taxon>
        <taxon>Bacillota</taxon>
        <taxon>Bacilli</taxon>
        <taxon>Bacillales</taxon>
        <taxon>Anoxybacillaceae</taxon>
        <taxon>Geobacillus</taxon>
    </lineage>
</organism>
<keyword id="KW-0349">Heme</keyword>
<keyword id="KW-0350">Heme biosynthesis</keyword>
<keyword id="KW-0408">Iron</keyword>
<keyword id="KW-0479">Metal-binding</keyword>
<keyword id="KW-0560">Oxidoreductase</keyword>
<accession>A4ITP5</accession>
<comment type="function">
    <text evidence="1">Involved in coproporphyrin-dependent heme b biosynthesis. Catalyzes the decarboxylation of Fe-coproporphyrin III (coproheme) to heme b (protoheme IX), the last step of the pathway. The reaction occurs in a stepwise manner with a three-propionate intermediate.</text>
</comment>
<comment type="catalytic activity">
    <reaction evidence="1">
        <text>Fe-coproporphyrin III + 2 H2O2 + 2 H(+) = heme b + 2 CO2 + 4 H2O</text>
        <dbReference type="Rhea" id="RHEA:56516"/>
        <dbReference type="ChEBI" id="CHEBI:15377"/>
        <dbReference type="ChEBI" id="CHEBI:15378"/>
        <dbReference type="ChEBI" id="CHEBI:16240"/>
        <dbReference type="ChEBI" id="CHEBI:16526"/>
        <dbReference type="ChEBI" id="CHEBI:60344"/>
        <dbReference type="ChEBI" id="CHEBI:68438"/>
        <dbReference type="EC" id="1.3.98.5"/>
    </reaction>
    <physiologicalReaction direction="left-to-right" evidence="1">
        <dbReference type="Rhea" id="RHEA:56517"/>
    </physiologicalReaction>
</comment>
<comment type="catalytic activity">
    <reaction evidence="1">
        <text>Fe-coproporphyrin III + H2O2 + H(+) = harderoheme III + CO2 + 2 H2O</text>
        <dbReference type="Rhea" id="RHEA:57940"/>
        <dbReference type="ChEBI" id="CHEBI:15377"/>
        <dbReference type="ChEBI" id="CHEBI:15378"/>
        <dbReference type="ChEBI" id="CHEBI:16240"/>
        <dbReference type="ChEBI" id="CHEBI:16526"/>
        <dbReference type="ChEBI" id="CHEBI:68438"/>
        <dbReference type="ChEBI" id="CHEBI:142463"/>
    </reaction>
    <physiologicalReaction direction="left-to-right" evidence="1">
        <dbReference type="Rhea" id="RHEA:57941"/>
    </physiologicalReaction>
</comment>
<comment type="catalytic activity">
    <reaction evidence="1">
        <text>harderoheme III + H2O2 + H(+) = heme b + CO2 + 2 H2O</text>
        <dbReference type="Rhea" id="RHEA:57944"/>
        <dbReference type="ChEBI" id="CHEBI:15377"/>
        <dbReference type="ChEBI" id="CHEBI:15378"/>
        <dbReference type="ChEBI" id="CHEBI:16240"/>
        <dbReference type="ChEBI" id="CHEBI:16526"/>
        <dbReference type="ChEBI" id="CHEBI:60344"/>
        <dbReference type="ChEBI" id="CHEBI:142463"/>
    </reaction>
    <physiologicalReaction direction="left-to-right" evidence="1">
        <dbReference type="Rhea" id="RHEA:57945"/>
    </physiologicalReaction>
</comment>
<comment type="cofactor">
    <cofactor evidence="1">
        <name>Fe-coproporphyrin III</name>
        <dbReference type="ChEBI" id="CHEBI:68438"/>
    </cofactor>
    <text evidence="1">Fe-coproporphyrin III acts both as a substrate and a redox cofactor.</text>
</comment>
<comment type="pathway">
    <text evidence="1">Porphyrin-containing compound metabolism; protoheme biosynthesis.</text>
</comment>
<comment type="similarity">
    <text evidence="1">Belongs to the ChdC family. Type 1 subfamily.</text>
</comment>
<comment type="sequence caution" evidence="2">
    <conflict type="erroneous initiation">
        <sequence resource="EMBL-CDS" id="ABO68699"/>
    </conflict>
</comment>
<name>CHDC_GEOTN</name>
<dbReference type="EC" id="1.3.98.5" evidence="1"/>
<dbReference type="EMBL" id="CP000557">
    <property type="protein sequence ID" value="ABO68699.1"/>
    <property type="status" value="ALT_INIT"/>
    <property type="molecule type" value="Genomic_DNA"/>
</dbReference>
<dbReference type="RefSeq" id="WP_035499495.1">
    <property type="nucleotide sequence ID" value="NC_009328.1"/>
</dbReference>
<dbReference type="SMR" id="A4ITP5"/>
<dbReference type="KEGG" id="gtn:GTNG_3362"/>
<dbReference type="eggNOG" id="COG3253">
    <property type="taxonomic scope" value="Bacteria"/>
</dbReference>
<dbReference type="HOGENOM" id="CLU_063226_1_0_9"/>
<dbReference type="UniPathway" id="UPA00252"/>
<dbReference type="Proteomes" id="UP000001578">
    <property type="component" value="Chromosome"/>
</dbReference>
<dbReference type="GO" id="GO:0020037">
    <property type="term" value="F:heme binding"/>
    <property type="evidence" value="ECO:0007669"/>
    <property type="project" value="InterPro"/>
</dbReference>
<dbReference type="GO" id="GO:0046872">
    <property type="term" value="F:metal ion binding"/>
    <property type="evidence" value="ECO:0007669"/>
    <property type="project" value="UniProtKB-KW"/>
</dbReference>
<dbReference type="GO" id="GO:0016634">
    <property type="term" value="F:oxidoreductase activity, acting on the CH-CH group of donors, oxygen as acceptor"/>
    <property type="evidence" value="ECO:0007669"/>
    <property type="project" value="UniProtKB-UniRule"/>
</dbReference>
<dbReference type="GO" id="GO:0004601">
    <property type="term" value="F:peroxidase activity"/>
    <property type="evidence" value="ECO:0007669"/>
    <property type="project" value="InterPro"/>
</dbReference>
<dbReference type="GO" id="GO:0006785">
    <property type="term" value="P:heme B biosynthetic process"/>
    <property type="evidence" value="ECO:0007669"/>
    <property type="project" value="UniProtKB-UniRule"/>
</dbReference>
<dbReference type="Gene3D" id="3.30.70.1030">
    <property type="entry name" value="Apc35880, domain 1"/>
    <property type="match status" value="2"/>
</dbReference>
<dbReference type="HAMAP" id="MF_01442">
    <property type="entry name" value="Coproheme_decarbox_1"/>
    <property type="match status" value="1"/>
</dbReference>
<dbReference type="InterPro" id="IPR031332">
    <property type="entry name" value="CHDC"/>
</dbReference>
<dbReference type="InterPro" id="IPR010644">
    <property type="entry name" value="ChdC/CLD"/>
</dbReference>
<dbReference type="InterPro" id="IPR011008">
    <property type="entry name" value="Dimeric_a/b-barrel"/>
</dbReference>
<dbReference type="NCBIfam" id="NF008913">
    <property type="entry name" value="PRK12276.1"/>
    <property type="match status" value="1"/>
</dbReference>
<dbReference type="PANTHER" id="PTHR36843:SF1">
    <property type="entry name" value="COPROHEME DECARBOXYLASE"/>
    <property type="match status" value="1"/>
</dbReference>
<dbReference type="PANTHER" id="PTHR36843">
    <property type="entry name" value="HEME-DEPENDENT PEROXIDASE YWFI-RELATED"/>
    <property type="match status" value="1"/>
</dbReference>
<dbReference type="Pfam" id="PF06778">
    <property type="entry name" value="Chlor_dismutase"/>
    <property type="match status" value="1"/>
</dbReference>
<dbReference type="SUPFAM" id="SSF54909">
    <property type="entry name" value="Dimeric alpha+beta barrel"/>
    <property type="match status" value="1"/>
</dbReference>
<sequence>MSEAAQTLDGWYCLHDFRTIDWSAWKMLPNEERQAAIDEFLALVDKWETTESEQQGSHAIYTIVGQKADILFMILRPTLDELHEIETALNKTKLAEYLLPAYSYVSVVELSNYLASGNEDPYQIPEVRRRLYPILPKTNYICFYPMDKRRQGDDNWYMLSMEQRRELMRAHGMTGRKYAGKVTQIITGSVGLDDFEWGVTLFSDDALQFKKLVYEMRFDEVSARFGEFGSFFVGNRLAAENVPTFFHI</sequence>
<proteinExistence type="inferred from homology"/>
<reference key="1">
    <citation type="journal article" date="2007" name="Proc. Natl. Acad. Sci. U.S.A.">
        <title>Genome and proteome of long-chain alkane degrading Geobacillus thermodenitrificans NG80-2 isolated from a deep-subsurface oil reservoir.</title>
        <authorList>
            <person name="Feng L."/>
            <person name="Wang W."/>
            <person name="Cheng J."/>
            <person name="Ren Y."/>
            <person name="Zhao G."/>
            <person name="Gao C."/>
            <person name="Tang Y."/>
            <person name="Liu X."/>
            <person name="Han W."/>
            <person name="Peng X."/>
            <person name="Liu R."/>
            <person name="Wang L."/>
        </authorList>
    </citation>
    <scope>NUCLEOTIDE SEQUENCE [LARGE SCALE GENOMIC DNA]</scope>
    <source>
        <strain>NG80-2</strain>
    </source>
</reference>
<protein>
    <recommendedName>
        <fullName evidence="1">Coproheme decarboxylase</fullName>
        <ecNumber evidence="1">1.3.98.5</ecNumber>
    </recommendedName>
    <alternativeName>
        <fullName evidence="1">Coproheme III oxidative decarboxylase</fullName>
    </alternativeName>
    <alternativeName>
        <fullName evidence="1">Hydrogen peroxide-dependent heme synthase</fullName>
    </alternativeName>
</protein>
<feature type="chain" id="PRO_0000294039" description="Coproheme decarboxylase">
    <location>
        <begin position="1"/>
        <end position="248"/>
    </location>
</feature>
<feature type="active site" evidence="1">
    <location>
        <position position="144"/>
    </location>
</feature>
<feature type="binding site" evidence="1">
    <location>
        <position position="130"/>
    </location>
    <ligand>
        <name>Fe-coproporphyrin III</name>
        <dbReference type="ChEBI" id="CHEBI:68438"/>
    </ligand>
</feature>
<feature type="binding site" evidence="1">
    <location>
        <begin position="144"/>
        <end position="148"/>
    </location>
    <ligand>
        <name>Fe-coproporphyrin III</name>
        <dbReference type="ChEBI" id="CHEBI:68438"/>
    </ligand>
</feature>
<feature type="binding site" description="axial binding residue" evidence="1">
    <location>
        <position position="171"/>
    </location>
    <ligand>
        <name>Fe-coproporphyrin III</name>
        <dbReference type="ChEBI" id="CHEBI:68438"/>
    </ligand>
    <ligandPart>
        <name>Fe</name>
        <dbReference type="ChEBI" id="CHEBI:18248"/>
    </ligandPart>
</feature>
<feature type="binding site" evidence="1">
    <location>
        <position position="184"/>
    </location>
    <ligand>
        <name>Fe-coproporphyrin III</name>
        <dbReference type="ChEBI" id="CHEBI:68438"/>
    </ligand>
</feature>
<feature type="binding site" evidence="1">
    <location>
        <position position="222"/>
    </location>
    <ligand>
        <name>Fe-coproporphyrin III</name>
        <dbReference type="ChEBI" id="CHEBI:68438"/>
    </ligand>
</feature>
<evidence type="ECO:0000255" key="1">
    <source>
        <dbReference type="HAMAP-Rule" id="MF_01442"/>
    </source>
</evidence>
<evidence type="ECO:0000305" key="2"/>
<gene>
    <name evidence="1" type="primary">chdC</name>
    <name type="ordered locus">GTNG_3362</name>
</gene>